<gene>
    <name type="ordered locus">At3g19410</name>
    <name type="ORF">MLD14.14</name>
</gene>
<reference key="1">
    <citation type="journal article" date="2000" name="DNA Res.">
        <title>Structural analysis of Arabidopsis thaliana chromosome 3. I. Sequence features of the regions of 4,504,864 bp covered by sixty P1 and TAC clones.</title>
        <authorList>
            <person name="Sato S."/>
            <person name="Nakamura Y."/>
            <person name="Kaneko T."/>
            <person name="Katoh T."/>
            <person name="Asamizu E."/>
            <person name="Tabata S."/>
        </authorList>
    </citation>
    <scope>NUCLEOTIDE SEQUENCE [LARGE SCALE GENOMIC DNA]</scope>
    <source>
        <strain>cv. Columbia</strain>
    </source>
</reference>
<reference key="2">
    <citation type="journal article" date="2017" name="Plant J.">
        <title>Araport11: a complete reannotation of the Arabidopsis thaliana reference genome.</title>
        <authorList>
            <person name="Cheng C.Y."/>
            <person name="Krishnakumar V."/>
            <person name="Chan A.P."/>
            <person name="Thibaud-Nissen F."/>
            <person name="Schobel S."/>
            <person name="Town C.D."/>
        </authorList>
    </citation>
    <scope>GENOME REANNOTATION</scope>
    <source>
        <strain>cv. Columbia</strain>
    </source>
</reference>
<name>FBK63_ARATH</name>
<feature type="chain" id="PRO_0000283223" description="Putative F-box/kelch-repeat protein At3g19410">
    <location>
        <begin position="1"/>
        <end position="373"/>
    </location>
</feature>
<feature type="domain" description="F-box" evidence="1">
    <location>
        <begin position="1"/>
        <end position="46"/>
    </location>
</feature>
<feature type="repeat" description="Kelch 1">
    <location>
        <begin position="101"/>
        <end position="148"/>
    </location>
</feature>
<feature type="repeat" description="Kelch 2">
    <location>
        <begin position="149"/>
        <end position="200"/>
    </location>
</feature>
<feature type="repeat" description="Kelch 3">
    <location>
        <begin position="329"/>
        <end position="373"/>
    </location>
</feature>
<evidence type="ECO:0000255" key="1">
    <source>
        <dbReference type="PROSITE-ProRule" id="PRU00080"/>
    </source>
</evidence>
<dbReference type="EMBL" id="AB025624">
    <property type="protein sequence ID" value="BAB02465.1"/>
    <property type="molecule type" value="Genomic_DNA"/>
</dbReference>
<dbReference type="EMBL" id="CP002686">
    <property type="protein sequence ID" value="AEE76237.1"/>
    <property type="molecule type" value="Genomic_DNA"/>
</dbReference>
<dbReference type="RefSeq" id="NP_188572.1">
    <property type="nucleotide sequence ID" value="NM_112828.1"/>
</dbReference>
<dbReference type="FunCoup" id="Q9LT76">
    <property type="interactions" value="2"/>
</dbReference>
<dbReference type="iPTMnet" id="Q9LT76"/>
<dbReference type="PaxDb" id="3702-AT3G19410.1"/>
<dbReference type="EnsemblPlants" id="AT3G19410.1">
    <property type="protein sequence ID" value="AT3G19410.1"/>
    <property type="gene ID" value="AT3G19410"/>
</dbReference>
<dbReference type="GeneID" id="821475"/>
<dbReference type="Gramene" id="AT3G19410.1">
    <property type="protein sequence ID" value="AT3G19410.1"/>
    <property type="gene ID" value="AT3G19410"/>
</dbReference>
<dbReference type="KEGG" id="ath:AT3G19410"/>
<dbReference type="Araport" id="AT3G19410"/>
<dbReference type="TAIR" id="AT3G19410"/>
<dbReference type="HOGENOM" id="CLU_034692_0_0_1"/>
<dbReference type="InParanoid" id="Q9LT76"/>
<dbReference type="OMA" id="CKTEIWV"/>
<dbReference type="OrthoDB" id="1867629at2759"/>
<dbReference type="PhylomeDB" id="Q9LT76"/>
<dbReference type="PRO" id="PR:Q9LT76"/>
<dbReference type="Proteomes" id="UP000006548">
    <property type="component" value="Chromosome 3"/>
</dbReference>
<dbReference type="ExpressionAtlas" id="Q9LT76">
    <property type="expression patterns" value="baseline and differential"/>
</dbReference>
<dbReference type="CDD" id="cd22157">
    <property type="entry name" value="F-box_AtFBW1-like"/>
    <property type="match status" value="1"/>
</dbReference>
<dbReference type="Gene3D" id="1.20.1280.50">
    <property type="match status" value="1"/>
</dbReference>
<dbReference type="InterPro" id="IPR006527">
    <property type="entry name" value="F-box-assoc_dom_typ1"/>
</dbReference>
<dbReference type="InterPro" id="IPR017451">
    <property type="entry name" value="F-box-assoc_interact_dom"/>
</dbReference>
<dbReference type="InterPro" id="IPR036047">
    <property type="entry name" value="F-box-like_dom_sf"/>
</dbReference>
<dbReference type="InterPro" id="IPR001810">
    <property type="entry name" value="F-box_dom"/>
</dbReference>
<dbReference type="InterPro" id="IPR011043">
    <property type="entry name" value="Gal_Oxase/kelch_b-propeller"/>
</dbReference>
<dbReference type="InterPro" id="IPR050796">
    <property type="entry name" value="SCF_F-box_component"/>
</dbReference>
<dbReference type="NCBIfam" id="TIGR01640">
    <property type="entry name" value="F_box_assoc_1"/>
    <property type="match status" value="1"/>
</dbReference>
<dbReference type="PANTHER" id="PTHR31672">
    <property type="entry name" value="BNACNNG10540D PROTEIN"/>
    <property type="match status" value="1"/>
</dbReference>
<dbReference type="Pfam" id="PF00646">
    <property type="entry name" value="F-box"/>
    <property type="match status" value="1"/>
</dbReference>
<dbReference type="Pfam" id="PF07734">
    <property type="entry name" value="FBA_1"/>
    <property type="match status" value="1"/>
</dbReference>
<dbReference type="SMART" id="SM00256">
    <property type="entry name" value="FBOX"/>
    <property type="match status" value="1"/>
</dbReference>
<dbReference type="SUPFAM" id="SSF81383">
    <property type="entry name" value="F-box domain"/>
    <property type="match status" value="1"/>
</dbReference>
<dbReference type="SUPFAM" id="SSF50965">
    <property type="entry name" value="Galactose oxidase, central domain"/>
    <property type="match status" value="1"/>
</dbReference>
<dbReference type="PROSITE" id="PS50181">
    <property type="entry name" value="FBOX"/>
    <property type="match status" value="1"/>
</dbReference>
<keyword id="KW-0880">Kelch repeat</keyword>
<keyword id="KW-1185">Reference proteome</keyword>
<keyword id="KW-0677">Repeat</keyword>
<protein>
    <recommendedName>
        <fullName>Putative F-box/kelch-repeat protein At3g19410</fullName>
    </recommendedName>
</protein>
<accession>Q9LT76</accession>
<sequence>MTIPELPKDLIEEILCYVPATYLKRLRSTCKGWNRLFKDDRRFAKKHYDKAAKQFLPLMSTNEELCAMSVNLHGTIPSLEVKDKPWLFVSDSKHCDIEISRIFHSGGLLLCFSRDGEISIIVWNPLTSETRLIRTRNRRDKGRNFVLGYYQEDKKTYYKILSFYLDSKDFEIFEFNSDSWRFIDDICPGLSLLYSDQCVSLKGNTYMFAIDDLSVSLLKYDFSTETSVPVPLPYKSRSFEAISLSVVREEKLSVLLQRDKSSKTEIWVTNVIDETTTKVMVVSWSKVLSLDLSPDLKIRYGESFLLDEEKKVIMIFNNRMEEENKSEDKLYIIGDDDNKATQVYTIHGYGPAVFNYFPSLVQIEQSSRQEEKS</sequence>
<proteinExistence type="predicted"/>
<organism>
    <name type="scientific">Arabidopsis thaliana</name>
    <name type="common">Mouse-ear cress</name>
    <dbReference type="NCBI Taxonomy" id="3702"/>
    <lineage>
        <taxon>Eukaryota</taxon>
        <taxon>Viridiplantae</taxon>
        <taxon>Streptophyta</taxon>
        <taxon>Embryophyta</taxon>
        <taxon>Tracheophyta</taxon>
        <taxon>Spermatophyta</taxon>
        <taxon>Magnoliopsida</taxon>
        <taxon>eudicotyledons</taxon>
        <taxon>Gunneridae</taxon>
        <taxon>Pentapetalae</taxon>
        <taxon>rosids</taxon>
        <taxon>malvids</taxon>
        <taxon>Brassicales</taxon>
        <taxon>Brassicaceae</taxon>
        <taxon>Camelineae</taxon>
        <taxon>Arabidopsis</taxon>
    </lineage>
</organism>